<organism>
    <name type="scientific">Roseiflexus sp. (strain RS-1)</name>
    <dbReference type="NCBI Taxonomy" id="357808"/>
    <lineage>
        <taxon>Bacteria</taxon>
        <taxon>Bacillati</taxon>
        <taxon>Chloroflexota</taxon>
        <taxon>Chloroflexia</taxon>
        <taxon>Chloroflexales</taxon>
        <taxon>Roseiflexineae</taxon>
        <taxon>Roseiflexaceae</taxon>
        <taxon>Roseiflexus</taxon>
    </lineage>
</organism>
<dbReference type="EC" id="6.1.1.23" evidence="1"/>
<dbReference type="EMBL" id="CP000686">
    <property type="protein sequence ID" value="ABQ90366.1"/>
    <property type="molecule type" value="Genomic_DNA"/>
</dbReference>
<dbReference type="RefSeq" id="WP_011956712.1">
    <property type="nucleotide sequence ID" value="NC_009523.1"/>
</dbReference>
<dbReference type="SMR" id="A5UUR3"/>
<dbReference type="STRING" id="357808.RoseRS_1979"/>
<dbReference type="KEGG" id="rrs:RoseRS_1979"/>
<dbReference type="eggNOG" id="COG0173">
    <property type="taxonomic scope" value="Bacteria"/>
</dbReference>
<dbReference type="HOGENOM" id="CLU_014330_3_2_0"/>
<dbReference type="OrthoDB" id="9802326at2"/>
<dbReference type="Proteomes" id="UP000006554">
    <property type="component" value="Chromosome"/>
</dbReference>
<dbReference type="GO" id="GO:0005737">
    <property type="term" value="C:cytoplasm"/>
    <property type="evidence" value="ECO:0007669"/>
    <property type="project" value="UniProtKB-SubCell"/>
</dbReference>
<dbReference type="GO" id="GO:0004815">
    <property type="term" value="F:aspartate-tRNA ligase activity"/>
    <property type="evidence" value="ECO:0007669"/>
    <property type="project" value="UniProtKB-UniRule"/>
</dbReference>
<dbReference type="GO" id="GO:0050560">
    <property type="term" value="F:aspartate-tRNA(Asn) ligase activity"/>
    <property type="evidence" value="ECO:0007669"/>
    <property type="project" value="UniProtKB-EC"/>
</dbReference>
<dbReference type="GO" id="GO:0005524">
    <property type="term" value="F:ATP binding"/>
    <property type="evidence" value="ECO:0007669"/>
    <property type="project" value="UniProtKB-UniRule"/>
</dbReference>
<dbReference type="GO" id="GO:0003676">
    <property type="term" value="F:nucleic acid binding"/>
    <property type="evidence" value="ECO:0007669"/>
    <property type="project" value="InterPro"/>
</dbReference>
<dbReference type="GO" id="GO:0006422">
    <property type="term" value="P:aspartyl-tRNA aminoacylation"/>
    <property type="evidence" value="ECO:0007669"/>
    <property type="project" value="UniProtKB-UniRule"/>
</dbReference>
<dbReference type="CDD" id="cd00777">
    <property type="entry name" value="AspRS_core"/>
    <property type="match status" value="1"/>
</dbReference>
<dbReference type="CDD" id="cd04317">
    <property type="entry name" value="EcAspRS_like_N"/>
    <property type="match status" value="1"/>
</dbReference>
<dbReference type="Gene3D" id="3.30.930.10">
    <property type="entry name" value="Bira Bifunctional Protein, Domain 2"/>
    <property type="match status" value="1"/>
</dbReference>
<dbReference type="Gene3D" id="3.30.1360.30">
    <property type="entry name" value="GAD-like domain"/>
    <property type="match status" value="1"/>
</dbReference>
<dbReference type="Gene3D" id="2.40.50.140">
    <property type="entry name" value="Nucleic acid-binding proteins"/>
    <property type="match status" value="1"/>
</dbReference>
<dbReference type="HAMAP" id="MF_00044">
    <property type="entry name" value="Asp_tRNA_synth_type1"/>
    <property type="match status" value="1"/>
</dbReference>
<dbReference type="InterPro" id="IPR004364">
    <property type="entry name" value="Aa-tRNA-synt_II"/>
</dbReference>
<dbReference type="InterPro" id="IPR006195">
    <property type="entry name" value="aa-tRNA-synth_II"/>
</dbReference>
<dbReference type="InterPro" id="IPR045864">
    <property type="entry name" value="aa-tRNA-synth_II/BPL/LPL"/>
</dbReference>
<dbReference type="InterPro" id="IPR004524">
    <property type="entry name" value="Asp-tRNA-ligase_1"/>
</dbReference>
<dbReference type="InterPro" id="IPR047089">
    <property type="entry name" value="Asp-tRNA-ligase_1_N"/>
</dbReference>
<dbReference type="InterPro" id="IPR002312">
    <property type="entry name" value="Asp/Asn-tRNA-synth_IIb"/>
</dbReference>
<dbReference type="InterPro" id="IPR047090">
    <property type="entry name" value="AspRS_core"/>
</dbReference>
<dbReference type="InterPro" id="IPR004115">
    <property type="entry name" value="GAD-like_sf"/>
</dbReference>
<dbReference type="InterPro" id="IPR029351">
    <property type="entry name" value="GAD_dom"/>
</dbReference>
<dbReference type="InterPro" id="IPR012340">
    <property type="entry name" value="NA-bd_OB-fold"/>
</dbReference>
<dbReference type="InterPro" id="IPR004365">
    <property type="entry name" value="NA-bd_OB_tRNA"/>
</dbReference>
<dbReference type="NCBIfam" id="TIGR00459">
    <property type="entry name" value="aspS_bact"/>
    <property type="match status" value="1"/>
</dbReference>
<dbReference type="NCBIfam" id="NF001750">
    <property type="entry name" value="PRK00476.1"/>
    <property type="match status" value="1"/>
</dbReference>
<dbReference type="PANTHER" id="PTHR22594:SF5">
    <property type="entry name" value="ASPARTATE--TRNA LIGASE, MITOCHONDRIAL"/>
    <property type="match status" value="1"/>
</dbReference>
<dbReference type="PANTHER" id="PTHR22594">
    <property type="entry name" value="ASPARTYL/LYSYL-TRNA SYNTHETASE"/>
    <property type="match status" value="1"/>
</dbReference>
<dbReference type="Pfam" id="PF02938">
    <property type="entry name" value="GAD"/>
    <property type="match status" value="1"/>
</dbReference>
<dbReference type="Pfam" id="PF00152">
    <property type="entry name" value="tRNA-synt_2"/>
    <property type="match status" value="1"/>
</dbReference>
<dbReference type="Pfam" id="PF01336">
    <property type="entry name" value="tRNA_anti-codon"/>
    <property type="match status" value="1"/>
</dbReference>
<dbReference type="PRINTS" id="PR01042">
    <property type="entry name" value="TRNASYNTHASP"/>
</dbReference>
<dbReference type="SUPFAM" id="SSF55681">
    <property type="entry name" value="Class II aaRS and biotin synthetases"/>
    <property type="match status" value="1"/>
</dbReference>
<dbReference type="SUPFAM" id="SSF55261">
    <property type="entry name" value="GAD domain-like"/>
    <property type="match status" value="1"/>
</dbReference>
<dbReference type="SUPFAM" id="SSF50249">
    <property type="entry name" value="Nucleic acid-binding proteins"/>
    <property type="match status" value="1"/>
</dbReference>
<dbReference type="PROSITE" id="PS50862">
    <property type="entry name" value="AA_TRNA_LIGASE_II"/>
    <property type="match status" value="1"/>
</dbReference>
<evidence type="ECO:0000255" key="1">
    <source>
        <dbReference type="HAMAP-Rule" id="MF_00044"/>
    </source>
</evidence>
<sequence>MYRSHTCGELRAEHIGQEVLLAGWVHRRRDHGPLIFIDLRDRYGITQIVFDSADSPVAHAVASDARVEYVLQVRGRVVQRPEEAYNPDIATGMIEVHATEATVLNPAKTPPLYINKEGGEEETLRLKYRYLDLRRERMQRNIMLRHRIVKFIRDFLDREGFVEIETPILIKSTPEGARDYLVPSRLHPGKFYALPQSPQQLKQLLMVAGFDRYFQIARCFRDEDQRADRQPEFTQLDMEMSFVDQGDVLDIIERLFTALCREIVPHKRLVTPFPRLTYAEAMERFGSDKPDLRYGLELVDVSDVVAASSFGVFRAALDTGGQVKGLRIPGAGSYSRKQIDEVVELAKQAGARGLLWAVVPGEGGEVRSSFGRQVSPDEMAAIIRRMEGAPGDLLLIVADPPKIVAQTLDRLRREFGARLNLADPNVLAWAWVIDFPLVEWNEEEQRWDAVHHPFTAPKDEDLHLMDTDPGRVRAKAYDLILNGYEAGGGSIRIHRRDVQQRLFDLLGIDRETAMRQFGHMLEAFEYGAPPHGGIAPGIDRICMILADEVTIREVMAFPKTQQAVDLMTNAPSPVDERQLRELHIALRLD</sequence>
<proteinExistence type="inferred from homology"/>
<protein>
    <recommendedName>
        <fullName evidence="1">Aspartate--tRNA(Asp/Asn) ligase</fullName>
        <ecNumber evidence="1">6.1.1.23</ecNumber>
    </recommendedName>
    <alternativeName>
        <fullName evidence="1">Aspartyl-tRNA synthetase</fullName>
        <shortName evidence="1">AspRS</shortName>
    </alternativeName>
    <alternativeName>
        <fullName evidence="1">Non-discriminating aspartyl-tRNA synthetase</fullName>
        <shortName evidence="1">ND-AspRS</shortName>
    </alternativeName>
</protein>
<name>SYDND_ROSS1</name>
<comment type="function">
    <text evidence="1">Aspartyl-tRNA synthetase with relaxed tRNA specificity since it is able to aspartylate not only its cognate tRNA(Asp) but also tRNA(Asn). Reaction proceeds in two steps: L-aspartate is first activated by ATP to form Asp-AMP and then transferred to the acceptor end of tRNA(Asp/Asn).</text>
</comment>
<comment type="catalytic activity">
    <reaction evidence="1">
        <text>tRNA(Asx) + L-aspartate + ATP = L-aspartyl-tRNA(Asx) + AMP + diphosphate</text>
        <dbReference type="Rhea" id="RHEA:18349"/>
        <dbReference type="Rhea" id="RHEA-COMP:9710"/>
        <dbReference type="Rhea" id="RHEA-COMP:9711"/>
        <dbReference type="ChEBI" id="CHEBI:29991"/>
        <dbReference type="ChEBI" id="CHEBI:30616"/>
        <dbReference type="ChEBI" id="CHEBI:33019"/>
        <dbReference type="ChEBI" id="CHEBI:78442"/>
        <dbReference type="ChEBI" id="CHEBI:78516"/>
        <dbReference type="ChEBI" id="CHEBI:456215"/>
        <dbReference type="EC" id="6.1.1.23"/>
    </reaction>
</comment>
<comment type="subunit">
    <text evidence="1">Homodimer.</text>
</comment>
<comment type="subcellular location">
    <subcellularLocation>
        <location evidence="1">Cytoplasm</location>
    </subcellularLocation>
</comment>
<comment type="similarity">
    <text evidence="1">Belongs to the class-II aminoacyl-tRNA synthetase family. Type 1 subfamily.</text>
</comment>
<feature type="chain" id="PRO_1000091034" description="Aspartate--tRNA(Asp/Asn) ligase">
    <location>
        <begin position="1"/>
        <end position="589"/>
    </location>
</feature>
<feature type="region of interest" description="Aspartate" evidence="1">
    <location>
        <begin position="199"/>
        <end position="202"/>
    </location>
</feature>
<feature type="binding site" evidence="1">
    <location>
        <position position="175"/>
    </location>
    <ligand>
        <name>L-aspartate</name>
        <dbReference type="ChEBI" id="CHEBI:29991"/>
    </ligand>
</feature>
<feature type="binding site" evidence="1">
    <location>
        <begin position="221"/>
        <end position="223"/>
    </location>
    <ligand>
        <name>ATP</name>
        <dbReference type="ChEBI" id="CHEBI:30616"/>
    </ligand>
</feature>
<feature type="binding site" evidence="1">
    <location>
        <position position="221"/>
    </location>
    <ligand>
        <name>L-aspartate</name>
        <dbReference type="ChEBI" id="CHEBI:29991"/>
    </ligand>
</feature>
<feature type="binding site" evidence="1">
    <location>
        <position position="230"/>
    </location>
    <ligand>
        <name>ATP</name>
        <dbReference type="ChEBI" id="CHEBI:30616"/>
    </ligand>
</feature>
<feature type="binding site" evidence="1">
    <location>
        <position position="451"/>
    </location>
    <ligand>
        <name>L-aspartate</name>
        <dbReference type="ChEBI" id="CHEBI:29991"/>
    </ligand>
</feature>
<feature type="binding site" evidence="1">
    <location>
        <position position="485"/>
    </location>
    <ligand>
        <name>ATP</name>
        <dbReference type="ChEBI" id="CHEBI:30616"/>
    </ligand>
</feature>
<feature type="binding site" evidence="1">
    <location>
        <position position="492"/>
    </location>
    <ligand>
        <name>L-aspartate</name>
        <dbReference type="ChEBI" id="CHEBI:29991"/>
    </ligand>
</feature>
<feature type="binding site" evidence="1">
    <location>
        <begin position="537"/>
        <end position="540"/>
    </location>
    <ligand>
        <name>ATP</name>
        <dbReference type="ChEBI" id="CHEBI:30616"/>
    </ligand>
</feature>
<feature type="site" description="Important for tRNA non-discrimination" evidence="1">
    <location>
        <position position="31"/>
    </location>
</feature>
<keyword id="KW-0030">Aminoacyl-tRNA synthetase</keyword>
<keyword id="KW-0067">ATP-binding</keyword>
<keyword id="KW-0963">Cytoplasm</keyword>
<keyword id="KW-0436">Ligase</keyword>
<keyword id="KW-0547">Nucleotide-binding</keyword>
<keyword id="KW-0648">Protein biosynthesis</keyword>
<reference key="1">
    <citation type="submission" date="2007-04" db="EMBL/GenBank/DDBJ databases">
        <title>Complete sequence of Roseiflexus sp. RS-1.</title>
        <authorList>
            <consortium name="US DOE Joint Genome Institute"/>
            <person name="Copeland A."/>
            <person name="Lucas S."/>
            <person name="Lapidus A."/>
            <person name="Barry K."/>
            <person name="Detter J.C."/>
            <person name="Glavina del Rio T."/>
            <person name="Hammon N."/>
            <person name="Israni S."/>
            <person name="Dalin E."/>
            <person name="Tice H."/>
            <person name="Pitluck S."/>
            <person name="Chertkov O."/>
            <person name="Brettin T."/>
            <person name="Bruce D."/>
            <person name="Han C."/>
            <person name="Schmutz J."/>
            <person name="Larimer F."/>
            <person name="Land M."/>
            <person name="Hauser L."/>
            <person name="Kyrpides N."/>
            <person name="Mikhailova N."/>
            <person name="Bryant D.A."/>
            <person name="Richardson P."/>
        </authorList>
    </citation>
    <scope>NUCLEOTIDE SEQUENCE [LARGE SCALE GENOMIC DNA]</scope>
    <source>
        <strain>RS-1</strain>
    </source>
</reference>
<accession>A5UUR3</accession>
<gene>
    <name evidence="1" type="primary">aspS</name>
    <name type="ordered locus">RoseRS_1979</name>
</gene>